<gene>
    <name evidence="1" type="primary">pdxK</name>
    <name type="ordered locus">Z3684</name>
    <name type="ordered locus">ECs3290</name>
</gene>
<accession>Q8XBL0</accession>
<accession>Q7ABT4</accession>
<comment type="function">
    <text evidence="1">B6-vitamer kinase involved in the salvage pathway of pyridoxal 5'-phosphate (PLP). Catalyzes the phosphorylation of pyridoxine (PN), pyridoxal (PL), and pyridoxamine (PM), forming their respective 5'-phosphorylated esters, i.e. PNP, PLP and PMP.</text>
</comment>
<comment type="catalytic activity">
    <reaction evidence="1">
        <text>pyridoxal + ATP = pyridoxal 5'-phosphate + ADP + H(+)</text>
        <dbReference type="Rhea" id="RHEA:10224"/>
        <dbReference type="ChEBI" id="CHEBI:15378"/>
        <dbReference type="ChEBI" id="CHEBI:17310"/>
        <dbReference type="ChEBI" id="CHEBI:30616"/>
        <dbReference type="ChEBI" id="CHEBI:456216"/>
        <dbReference type="ChEBI" id="CHEBI:597326"/>
        <dbReference type="EC" id="2.7.1.35"/>
    </reaction>
</comment>
<comment type="catalytic activity">
    <reaction evidence="1">
        <text>pyridoxine + ATP = pyridoxine 5'-phosphate + ADP + H(+)</text>
        <dbReference type="Rhea" id="RHEA:25108"/>
        <dbReference type="ChEBI" id="CHEBI:15378"/>
        <dbReference type="ChEBI" id="CHEBI:16709"/>
        <dbReference type="ChEBI" id="CHEBI:30616"/>
        <dbReference type="ChEBI" id="CHEBI:58589"/>
        <dbReference type="ChEBI" id="CHEBI:456216"/>
        <dbReference type="EC" id="2.7.1.35"/>
    </reaction>
</comment>
<comment type="catalytic activity">
    <reaction evidence="1">
        <text>pyridoxamine + ATP = pyridoxamine 5'-phosphate + ADP + H(+)</text>
        <dbReference type="Rhea" id="RHEA:25104"/>
        <dbReference type="ChEBI" id="CHEBI:15378"/>
        <dbReference type="ChEBI" id="CHEBI:30616"/>
        <dbReference type="ChEBI" id="CHEBI:57761"/>
        <dbReference type="ChEBI" id="CHEBI:58451"/>
        <dbReference type="ChEBI" id="CHEBI:456216"/>
        <dbReference type="EC" id="2.7.1.35"/>
    </reaction>
</comment>
<comment type="cofactor">
    <cofactor evidence="1">
        <name>Mg(2+)</name>
        <dbReference type="ChEBI" id="CHEBI:18420"/>
    </cofactor>
</comment>
<comment type="pathway">
    <text evidence="1">Cofactor metabolism; pyridoxal 5'-phosphate salvage; pyridoxal 5'-phosphate from pyridoxal: step 1/1.</text>
</comment>
<comment type="pathway">
    <text evidence="1">Cofactor metabolism; pyridoxal 5'-phosphate salvage; pyridoxine 5'-phosphate from pyridoxine: step 1/1.</text>
</comment>
<comment type="pathway">
    <text evidence="1">Cofactor metabolism; pyridoxal 5'-phosphate salvage; pyridoxamine 5'-phosphate from pyridoxamine: step 1/1.</text>
</comment>
<comment type="subunit">
    <text evidence="1">Homodimer.</text>
</comment>
<comment type="similarity">
    <text evidence="1">Belongs to the pyridoxine kinase family. PdxK subfamily.</text>
</comment>
<proteinExistence type="inferred from homology"/>
<keyword id="KW-0067">ATP-binding</keyword>
<keyword id="KW-0418">Kinase</keyword>
<keyword id="KW-0460">Magnesium</keyword>
<keyword id="KW-0479">Metal-binding</keyword>
<keyword id="KW-0547">Nucleotide-binding</keyword>
<keyword id="KW-1185">Reference proteome</keyword>
<keyword id="KW-0808">Transferase</keyword>
<keyword id="KW-0862">Zinc</keyword>
<dbReference type="EC" id="2.7.1.35" evidence="1"/>
<dbReference type="EMBL" id="AE005174">
    <property type="protein sequence ID" value="AAG57537.2"/>
    <property type="molecule type" value="Genomic_DNA"/>
</dbReference>
<dbReference type="EMBL" id="BA000007">
    <property type="protein sequence ID" value="BAB36713.1"/>
    <property type="molecule type" value="Genomic_DNA"/>
</dbReference>
<dbReference type="PIR" id="B98040">
    <property type="entry name" value="B98040"/>
</dbReference>
<dbReference type="PIR" id="E85884">
    <property type="entry name" value="E85884"/>
</dbReference>
<dbReference type="RefSeq" id="NP_311317.1">
    <property type="nucleotide sequence ID" value="NC_002695.1"/>
</dbReference>
<dbReference type="RefSeq" id="WP_000096648.1">
    <property type="nucleotide sequence ID" value="NZ_VOAI01000001.1"/>
</dbReference>
<dbReference type="SMR" id="Q8XBL0"/>
<dbReference type="STRING" id="155864.Z3684"/>
<dbReference type="GeneID" id="915526"/>
<dbReference type="KEGG" id="ece:Z3684"/>
<dbReference type="KEGG" id="ecs:ECs_3290"/>
<dbReference type="PATRIC" id="fig|386585.9.peg.3437"/>
<dbReference type="eggNOG" id="COG2240">
    <property type="taxonomic scope" value="Bacteria"/>
</dbReference>
<dbReference type="HOGENOM" id="CLU_046496_3_1_6"/>
<dbReference type="OMA" id="AWTHQHP"/>
<dbReference type="UniPathway" id="UPA01068">
    <property type="reaction ID" value="UER00298"/>
</dbReference>
<dbReference type="UniPathway" id="UPA01068">
    <property type="reaction ID" value="UER00299"/>
</dbReference>
<dbReference type="UniPathway" id="UPA01068">
    <property type="reaction ID" value="UER00300"/>
</dbReference>
<dbReference type="Proteomes" id="UP000000558">
    <property type="component" value="Chromosome"/>
</dbReference>
<dbReference type="Proteomes" id="UP000002519">
    <property type="component" value="Chromosome"/>
</dbReference>
<dbReference type="GO" id="GO:0005829">
    <property type="term" value="C:cytosol"/>
    <property type="evidence" value="ECO:0007669"/>
    <property type="project" value="TreeGrafter"/>
</dbReference>
<dbReference type="GO" id="GO:0005524">
    <property type="term" value="F:ATP binding"/>
    <property type="evidence" value="ECO:0007669"/>
    <property type="project" value="UniProtKB-UniRule"/>
</dbReference>
<dbReference type="GO" id="GO:0008902">
    <property type="term" value="F:hydroxymethylpyrimidine kinase activity"/>
    <property type="evidence" value="ECO:0007669"/>
    <property type="project" value="TreeGrafter"/>
</dbReference>
<dbReference type="GO" id="GO:0000287">
    <property type="term" value="F:magnesium ion binding"/>
    <property type="evidence" value="ECO:0007669"/>
    <property type="project" value="UniProtKB-UniRule"/>
</dbReference>
<dbReference type="GO" id="GO:0008478">
    <property type="term" value="F:pyridoxal kinase activity"/>
    <property type="evidence" value="ECO:0007669"/>
    <property type="project" value="UniProtKB-UniRule"/>
</dbReference>
<dbReference type="GO" id="GO:0008270">
    <property type="term" value="F:zinc ion binding"/>
    <property type="evidence" value="ECO:0007669"/>
    <property type="project" value="UniProtKB-UniRule"/>
</dbReference>
<dbReference type="GO" id="GO:0009443">
    <property type="term" value="P:pyridoxal 5'-phosphate salvage"/>
    <property type="evidence" value="ECO:0007669"/>
    <property type="project" value="UniProtKB-UniRule"/>
</dbReference>
<dbReference type="CDD" id="cd01173">
    <property type="entry name" value="pyridoxal_pyridoxamine_kinase"/>
    <property type="match status" value="1"/>
</dbReference>
<dbReference type="FunFam" id="3.40.1190.20:FF:000009">
    <property type="entry name" value="Pyridoxine/pyridoxal/pyridoxamine kinase"/>
    <property type="match status" value="1"/>
</dbReference>
<dbReference type="Gene3D" id="3.40.1190.20">
    <property type="match status" value="1"/>
</dbReference>
<dbReference type="HAMAP" id="MF_01638">
    <property type="entry name" value="PdxK"/>
    <property type="match status" value="1"/>
</dbReference>
<dbReference type="InterPro" id="IPR023479">
    <property type="entry name" value="PdxK"/>
</dbReference>
<dbReference type="InterPro" id="IPR013749">
    <property type="entry name" value="PM/HMP-P_kinase-1"/>
</dbReference>
<dbReference type="InterPro" id="IPR004625">
    <property type="entry name" value="PyrdxlKinase"/>
</dbReference>
<dbReference type="InterPro" id="IPR029056">
    <property type="entry name" value="Ribokinase-like"/>
</dbReference>
<dbReference type="NCBIfam" id="NF006034">
    <property type="entry name" value="PRK08176.1"/>
    <property type="match status" value="1"/>
</dbReference>
<dbReference type="NCBIfam" id="TIGR00687">
    <property type="entry name" value="pyridox_kin"/>
    <property type="match status" value="1"/>
</dbReference>
<dbReference type="PANTHER" id="PTHR10534">
    <property type="entry name" value="PYRIDOXAL KINASE"/>
    <property type="match status" value="1"/>
</dbReference>
<dbReference type="PANTHER" id="PTHR10534:SF15">
    <property type="entry name" value="PYRIDOXINE_PYRIDOXAL_PYRIDOXAMINE KINASE"/>
    <property type="match status" value="1"/>
</dbReference>
<dbReference type="Pfam" id="PF08543">
    <property type="entry name" value="Phos_pyr_kin"/>
    <property type="match status" value="1"/>
</dbReference>
<dbReference type="SUPFAM" id="SSF53613">
    <property type="entry name" value="Ribokinase-like"/>
    <property type="match status" value="1"/>
</dbReference>
<evidence type="ECO:0000255" key="1">
    <source>
        <dbReference type="HAMAP-Rule" id="MF_01638"/>
    </source>
</evidence>
<organism>
    <name type="scientific">Escherichia coli O157:H7</name>
    <dbReference type="NCBI Taxonomy" id="83334"/>
    <lineage>
        <taxon>Bacteria</taxon>
        <taxon>Pseudomonadati</taxon>
        <taxon>Pseudomonadota</taxon>
        <taxon>Gammaproteobacteria</taxon>
        <taxon>Enterobacterales</taxon>
        <taxon>Enterobacteriaceae</taxon>
        <taxon>Escherichia</taxon>
    </lineage>
</organism>
<sequence>MSSLLLFNDKSRALQADIVAVQSQVVYGSVGNSIAVPAIKQNGLNVFAVPTVLLSNTPHYDTFYGGAIPDEWFSGYLRALQERDALRQLRAVTTGYMGTASQIKILAEWLTALRKDHPDLLIMVDPVIGDIDSGIYVKPDLPEAYRQYLLPLAQGITPNIFELEILTGKNCRDLDSAIAAAKSLLSDTLKWVVITSASGNEENQEMLVVVVTADSVNVISHSRVKTDLKGTGDLFCAQLISGLLKGKALNDAVHRAGLRVLEVMRYTQQHESDELILPPLAEA</sequence>
<protein>
    <recommendedName>
        <fullName evidence="1">Pyridoxine/pyridoxal/pyridoxamine kinase</fullName>
        <shortName evidence="1">PN/PL/PM kinase</shortName>
        <ecNumber evidence="1">2.7.1.35</ecNumber>
    </recommendedName>
    <alternativeName>
        <fullName evidence="1">B6-vitamer kinase</fullName>
    </alternativeName>
</protein>
<name>PDXK_ECO57</name>
<feature type="chain" id="PRO_0000268836" description="Pyridoxine/pyridoxal/pyridoxamine kinase">
    <location>
        <begin position="1"/>
        <end position="283"/>
    </location>
</feature>
<feature type="binding site" evidence="1">
    <location>
        <position position="23"/>
    </location>
    <ligand>
        <name>substrate</name>
    </ligand>
</feature>
<feature type="binding site" evidence="1">
    <location>
        <position position="59"/>
    </location>
    <ligand>
        <name>substrate</name>
    </ligand>
</feature>
<feature type="binding site" evidence="1">
    <location>
        <position position="125"/>
    </location>
    <ligand>
        <name>ATP</name>
        <dbReference type="ChEBI" id="CHEBI:30616"/>
    </ligand>
</feature>
<feature type="binding site" evidence="1">
    <location>
        <position position="136"/>
    </location>
    <ligand>
        <name>Mg(2+)</name>
        <dbReference type="ChEBI" id="CHEBI:18420"/>
    </ligand>
</feature>
<feature type="binding site" evidence="1">
    <location>
        <position position="157"/>
    </location>
    <ligand>
        <name>ATP</name>
        <dbReference type="ChEBI" id="CHEBI:30616"/>
    </ligand>
</feature>
<feature type="binding site" evidence="1">
    <location>
        <position position="162"/>
    </location>
    <ligand>
        <name>ATP</name>
        <dbReference type="ChEBI" id="CHEBI:30616"/>
    </ligand>
</feature>
<feature type="binding site" evidence="1">
    <location>
        <position position="162"/>
    </location>
    <ligand>
        <name>Mg(2+)</name>
        <dbReference type="ChEBI" id="CHEBI:18420"/>
    </ligand>
</feature>
<feature type="binding site" evidence="1">
    <location>
        <position position="195"/>
    </location>
    <ligand>
        <name>ATP</name>
        <dbReference type="ChEBI" id="CHEBI:30616"/>
    </ligand>
</feature>
<feature type="binding site" evidence="1">
    <location>
        <begin position="221"/>
        <end position="224"/>
    </location>
    <ligand>
        <name>ATP</name>
        <dbReference type="ChEBI" id="CHEBI:30616"/>
    </ligand>
</feature>
<feature type="binding site" evidence="1">
    <location>
        <position position="231"/>
    </location>
    <ligand>
        <name>ATP</name>
        <dbReference type="ChEBI" id="CHEBI:30616"/>
    </ligand>
</feature>
<feature type="binding site" evidence="1">
    <location>
        <position position="233"/>
    </location>
    <ligand>
        <name>substrate</name>
    </ligand>
</feature>
<reference key="1">
    <citation type="journal article" date="2001" name="Nature">
        <title>Genome sequence of enterohaemorrhagic Escherichia coli O157:H7.</title>
        <authorList>
            <person name="Perna N.T."/>
            <person name="Plunkett G. III"/>
            <person name="Burland V."/>
            <person name="Mau B."/>
            <person name="Glasner J.D."/>
            <person name="Rose D.J."/>
            <person name="Mayhew G.F."/>
            <person name="Evans P.S."/>
            <person name="Gregor J."/>
            <person name="Kirkpatrick H.A."/>
            <person name="Posfai G."/>
            <person name="Hackett J."/>
            <person name="Klink S."/>
            <person name="Boutin A."/>
            <person name="Shao Y."/>
            <person name="Miller L."/>
            <person name="Grotbeck E.J."/>
            <person name="Davis N.W."/>
            <person name="Lim A."/>
            <person name="Dimalanta E.T."/>
            <person name="Potamousis K."/>
            <person name="Apodaca J."/>
            <person name="Anantharaman T.S."/>
            <person name="Lin J."/>
            <person name="Yen G."/>
            <person name="Schwartz D.C."/>
            <person name="Welch R.A."/>
            <person name="Blattner F.R."/>
        </authorList>
    </citation>
    <scope>NUCLEOTIDE SEQUENCE [LARGE SCALE GENOMIC DNA]</scope>
    <source>
        <strain>O157:H7 / EDL933 / ATCC 700927 / EHEC</strain>
    </source>
</reference>
<reference key="2">
    <citation type="journal article" date="2001" name="DNA Res.">
        <title>Complete genome sequence of enterohemorrhagic Escherichia coli O157:H7 and genomic comparison with a laboratory strain K-12.</title>
        <authorList>
            <person name="Hayashi T."/>
            <person name="Makino K."/>
            <person name="Ohnishi M."/>
            <person name="Kurokawa K."/>
            <person name="Ishii K."/>
            <person name="Yokoyama K."/>
            <person name="Han C.-G."/>
            <person name="Ohtsubo E."/>
            <person name="Nakayama K."/>
            <person name="Murata T."/>
            <person name="Tanaka M."/>
            <person name="Tobe T."/>
            <person name="Iida T."/>
            <person name="Takami H."/>
            <person name="Honda T."/>
            <person name="Sasakawa C."/>
            <person name="Ogasawara N."/>
            <person name="Yasunaga T."/>
            <person name="Kuhara S."/>
            <person name="Shiba T."/>
            <person name="Hattori M."/>
            <person name="Shinagawa H."/>
        </authorList>
    </citation>
    <scope>NUCLEOTIDE SEQUENCE [LARGE SCALE GENOMIC DNA]</scope>
    <source>
        <strain>O157:H7 / Sakai / RIMD 0509952 / EHEC</strain>
    </source>
</reference>